<sequence length="906" mass="104427">MVGLGVFARKFFGSAYERRLKALRQKVAQINALEEQFQKLNDTQLCQKTDEFRKRLTEGETVDLLLPEAFATVREAAKRVYDMRPFDVQLIGGMVLHNCGIAEMRTGEGKTLMATLPIYLNALEGKGVHVVTVNDYLARRDAETMGKIFSFLGLTTGVILHDLDSDARRSAYACDITYATNNELGFDYLRDNMAFDRSQMVQRGHHYAIVDEVDSILIDEARTPLIISGPLEDRTDFYNLIDTFIPSLTPEDYEIDEKQKTITFTEVGTEKIEKMLEQAGHLKGKSLYDIENVAIIHHINNALKAHKLFVRDKDYIVRNNEIVIIDEFTGRMMPGRRYSEGLHQALEAKEHVAIQPENQTLASITFQNYFRMYRKLSGMTGTATTEAEEFSNIYDLEVVEIPTNLPIQRRDEDDEIYRTAEEKYRAIVRDIRQAHEKGQPILVGTTSIEKSEQLAERLRKEGITDFRVLNARYHEQEAYIIAQAGVPGALTIATNMAGRGTDIQLGGNVEMRIRQELQDMPEGIERTAKIEEIKKDVKQLKEKALAAGGFYVIATERHESRRIDNQLRGRSGRQGDPGRSKFFLSLQDDLMRIFGSNRMDGMLQKLGLKENEAITHPWINKALEKAQKKVEARNFEIRKNLLKYDDVMNDQRKVIFEQRMEIMNADDLIEMILEMRNEVIEDLVETYIPSETYSEKWDVKALQEEIHHLFNLELPVEEWAKEDGIAEEQILERISNAVTKLENERAERYSPEILAYFHKAVLLETIDTLWREHLVNLDHLRSVVGFRGYAQRDPLNEYKTESFELFQAMLRNLRRIVTSKLMRFEIIQQPTESLIPEQVDGNDSALNDQRKGNDSPLWMQIQENRVVVNPKDRNPKDSTTWGKVGRNERCPCGSEKKYKHCHGAFV</sequence>
<name>SECA_BARQU</name>
<gene>
    <name evidence="1" type="primary">secA</name>
    <name type="ordered locus">BQ01870</name>
</gene>
<feature type="chain" id="PRO_0000320737" description="Protein translocase subunit SecA">
    <location>
        <begin position="1"/>
        <end position="906"/>
    </location>
</feature>
<feature type="binding site" evidence="1">
    <location>
        <position position="89"/>
    </location>
    <ligand>
        <name>ATP</name>
        <dbReference type="ChEBI" id="CHEBI:30616"/>
    </ligand>
</feature>
<feature type="binding site" evidence="1">
    <location>
        <begin position="107"/>
        <end position="111"/>
    </location>
    <ligand>
        <name>ATP</name>
        <dbReference type="ChEBI" id="CHEBI:30616"/>
    </ligand>
</feature>
<feature type="binding site" evidence="1">
    <location>
        <position position="502"/>
    </location>
    <ligand>
        <name>ATP</name>
        <dbReference type="ChEBI" id="CHEBI:30616"/>
    </ligand>
</feature>
<feature type="binding site" evidence="1">
    <location>
        <position position="890"/>
    </location>
    <ligand>
        <name>Zn(2+)</name>
        <dbReference type="ChEBI" id="CHEBI:29105"/>
    </ligand>
</feature>
<feature type="binding site" evidence="1">
    <location>
        <position position="892"/>
    </location>
    <ligand>
        <name>Zn(2+)</name>
        <dbReference type="ChEBI" id="CHEBI:29105"/>
    </ligand>
</feature>
<feature type="binding site" evidence="1">
    <location>
        <position position="901"/>
    </location>
    <ligand>
        <name>Zn(2+)</name>
        <dbReference type="ChEBI" id="CHEBI:29105"/>
    </ligand>
</feature>
<feature type="binding site" evidence="1">
    <location>
        <position position="902"/>
    </location>
    <ligand>
        <name>Zn(2+)</name>
        <dbReference type="ChEBI" id="CHEBI:29105"/>
    </ligand>
</feature>
<proteinExistence type="inferred from homology"/>
<dbReference type="EC" id="7.4.2.8" evidence="1"/>
<dbReference type="EMBL" id="BX897700">
    <property type="protein sequence ID" value="CAF25690.1"/>
    <property type="molecule type" value="Genomic_DNA"/>
</dbReference>
<dbReference type="RefSeq" id="WP_011179005.1">
    <property type="nucleotide sequence ID" value="NC_005955.1"/>
</dbReference>
<dbReference type="SMR" id="Q6G0Q8"/>
<dbReference type="KEGG" id="bqu:BQ01870"/>
<dbReference type="eggNOG" id="COG0653">
    <property type="taxonomic scope" value="Bacteria"/>
</dbReference>
<dbReference type="HOGENOM" id="CLU_005314_3_0_5"/>
<dbReference type="OrthoDB" id="9805579at2"/>
<dbReference type="Proteomes" id="UP000000597">
    <property type="component" value="Chromosome"/>
</dbReference>
<dbReference type="GO" id="GO:0031522">
    <property type="term" value="C:cell envelope Sec protein transport complex"/>
    <property type="evidence" value="ECO:0007669"/>
    <property type="project" value="TreeGrafter"/>
</dbReference>
<dbReference type="GO" id="GO:0005829">
    <property type="term" value="C:cytosol"/>
    <property type="evidence" value="ECO:0007669"/>
    <property type="project" value="TreeGrafter"/>
</dbReference>
<dbReference type="GO" id="GO:0005886">
    <property type="term" value="C:plasma membrane"/>
    <property type="evidence" value="ECO:0007669"/>
    <property type="project" value="UniProtKB-SubCell"/>
</dbReference>
<dbReference type="GO" id="GO:0005524">
    <property type="term" value="F:ATP binding"/>
    <property type="evidence" value="ECO:0007669"/>
    <property type="project" value="UniProtKB-UniRule"/>
</dbReference>
<dbReference type="GO" id="GO:0046872">
    <property type="term" value="F:metal ion binding"/>
    <property type="evidence" value="ECO:0007669"/>
    <property type="project" value="UniProtKB-KW"/>
</dbReference>
<dbReference type="GO" id="GO:0008564">
    <property type="term" value="F:protein-exporting ATPase activity"/>
    <property type="evidence" value="ECO:0007669"/>
    <property type="project" value="UniProtKB-EC"/>
</dbReference>
<dbReference type="GO" id="GO:0065002">
    <property type="term" value="P:intracellular protein transmembrane transport"/>
    <property type="evidence" value="ECO:0007669"/>
    <property type="project" value="UniProtKB-UniRule"/>
</dbReference>
<dbReference type="GO" id="GO:0017038">
    <property type="term" value="P:protein import"/>
    <property type="evidence" value="ECO:0007669"/>
    <property type="project" value="InterPro"/>
</dbReference>
<dbReference type="GO" id="GO:0006605">
    <property type="term" value="P:protein targeting"/>
    <property type="evidence" value="ECO:0007669"/>
    <property type="project" value="UniProtKB-UniRule"/>
</dbReference>
<dbReference type="GO" id="GO:0043952">
    <property type="term" value="P:protein transport by the Sec complex"/>
    <property type="evidence" value="ECO:0007669"/>
    <property type="project" value="TreeGrafter"/>
</dbReference>
<dbReference type="CDD" id="cd17928">
    <property type="entry name" value="DEXDc_SecA"/>
    <property type="match status" value="1"/>
</dbReference>
<dbReference type="CDD" id="cd18803">
    <property type="entry name" value="SF2_C_secA"/>
    <property type="match status" value="1"/>
</dbReference>
<dbReference type="FunFam" id="3.90.1440.10:FF:000001">
    <property type="entry name" value="Preprotein translocase subunit SecA"/>
    <property type="match status" value="1"/>
</dbReference>
<dbReference type="FunFam" id="1.10.3060.10:FF:000003">
    <property type="entry name" value="Protein translocase subunit SecA"/>
    <property type="match status" value="1"/>
</dbReference>
<dbReference type="FunFam" id="3.40.50.300:FF:000334">
    <property type="entry name" value="Protein translocase subunit SecA"/>
    <property type="match status" value="1"/>
</dbReference>
<dbReference type="FunFam" id="3.40.50.300:FF:001790">
    <property type="entry name" value="Protein translocase subunit SecA"/>
    <property type="match status" value="1"/>
</dbReference>
<dbReference type="Gene3D" id="3.10.450.50">
    <property type="match status" value="1"/>
</dbReference>
<dbReference type="Gene3D" id="1.10.3060.10">
    <property type="entry name" value="Helical scaffold and wing domains of SecA"/>
    <property type="match status" value="1"/>
</dbReference>
<dbReference type="Gene3D" id="3.40.50.300">
    <property type="entry name" value="P-loop containing nucleotide triphosphate hydrolases"/>
    <property type="match status" value="2"/>
</dbReference>
<dbReference type="Gene3D" id="3.90.1440.10">
    <property type="entry name" value="SecA, preprotein cross-linking domain"/>
    <property type="match status" value="1"/>
</dbReference>
<dbReference type="HAMAP" id="MF_01382">
    <property type="entry name" value="SecA"/>
    <property type="match status" value="1"/>
</dbReference>
<dbReference type="InterPro" id="IPR014001">
    <property type="entry name" value="Helicase_ATP-bd"/>
</dbReference>
<dbReference type="InterPro" id="IPR001650">
    <property type="entry name" value="Helicase_C-like"/>
</dbReference>
<dbReference type="InterPro" id="IPR027417">
    <property type="entry name" value="P-loop_NTPase"/>
</dbReference>
<dbReference type="InterPro" id="IPR004027">
    <property type="entry name" value="SEC_C_motif"/>
</dbReference>
<dbReference type="InterPro" id="IPR000185">
    <property type="entry name" value="SecA"/>
</dbReference>
<dbReference type="InterPro" id="IPR011115">
    <property type="entry name" value="SecA_DEAD"/>
</dbReference>
<dbReference type="InterPro" id="IPR014018">
    <property type="entry name" value="SecA_motor_DEAD"/>
</dbReference>
<dbReference type="InterPro" id="IPR011130">
    <property type="entry name" value="SecA_preprotein_X-link_dom"/>
</dbReference>
<dbReference type="InterPro" id="IPR044722">
    <property type="entry name" value="SecA_SF2_C"/>
</dbReference>
<dbReference type="InterPro" id="IPR011116">
    <property type="entry name" value="SecA_Wing/Scaffold"/>
</dbReference>
<dbReference type="InterPro" id="IPR036266">
    <property type="entry name" value="SecA_Wing/Scaffold_sf"/>
</dbReference>
<dbReference type="InterPro" id="IPR036670">
    <property type="entry name" value="SecA_X-link_sf"/>
</dbReference>
<dbReference type="NCBIfam" id="NF009538">
    <property type="entry name" value="PRK12904.1"/>
    <property type="match status" value="1"/>
</dbReference>
<dbReference type="NCBIfam" id="TIGR00963">
    <property type="entry name" value="secA"/>
    <property type="match status" value="1"/>
</dbReference>
<dbReference type="PANTHER" id="PTHR30612:SF0">
    <property type="entry name" value="CHLOROPLAST PROTEIN-TRANSPORTING ATPASE"/>
    <property type="match status" value="1"/>
</dbReference>
<dbReference type="PANTHER" id="PTHR30612">
    <property type="entry name" value="SECA INNER MEMBRANE COMPONENT OF SEC PROTEIN SECRETION SYSTEM"/>
    <property type="match status" value="1"/>
</dbReference>
<dbReference type="Pfam" id="PF21090">
    <property type="entry name" value="P-loop_SecA"/>
    <property type="match status" value="1"/>
</dbReference>
<dbReference type="Pfam" id="PF02810">
    <property type="entry name" value="SEC-C"/>
    <property type="match status" value="1"/>
</dbReference>
<dbReference type="Pfam" id="PF07517">
    <property type="entry name" value="SecA_DEAD"/>
    <property type="match status" value="1"/>
</dbReference>
<dbReference type="Pfam" id="PF01043">
    <property type="entry name" value="SecA_PP_bind"/>
    <property type="match status" value="1"/>
</dbReference>
<dbReference type="Pfam" id="PF07516">
    <property type="entry name" value="SecA_SW"/>
    <property type="match status" value="1"/>
</dbReference>
<dbReference type="PRINTS" id="PR00906">
    <property type="entry name" value="SECA"/>
</dbReference>
<dbReference type="SMART" id="SM00957">
    <property type="entry name" value="SecA_DEAD"/>
    <property type="match status" value="1"/>
</dbReference>
<dbReference type="SMART" id="SM00958">
    <property type="entry name" value="SecA_PP_bind"/>
    <property type="match status" value="1"/>
</dbReference>
<dbReference type="SUPFAM" id="SSF81886">
    <property type="entry name" value="Helical scaffold and wing domains of SecA"/>
    <property type="match status" value="1"/>
</dbReference>
<dbReference type="SUPFAM" id="SSF52540">
    <property type="entry name" value="P-loop containing nucleoside triphosphate hydrolases"/>
    <property type="match status" value="2"/>
</dbReference>
<dbReference type="SUPFAM" id="SSF81767">
    <property type="entry name" value="Pre-protein crosslinking domain of SecA"/>
    <property type="match status" value="1"/>
</dbReference>
<dbReference type="PROSITE" id="PS51196">
    <property type="entry name" value="SECA_MOTOR_DEAD"/>
    <property type="match status" value="1"/>
</dbReference>
<protein>
    <recommendedName>
        <fullName evidence="1">Protein translocase subunit SecA</fullName>
        <ecNumber evidence="1">7.4.2.8</ecNumber>
    </recommendedName>
</protein>
<accession>Q6G0Q8</accession>
<reference key="1">
    <citation type="journal article" date="2004" name="Proc. Natl. Acad. Sci. U.S.A.">
        <title>The louse-borne human pathogen Bartonella quintana is a genomic derivative of the zoonotic agent Bartonella henselae.</title>
        <authorList>
            <person name="Alsmark U.C.M."/>
            <person name="Frank A.C."/>
            <person name="Karlberg E.O."/>
            <person name="Legault B.-A."/>
            <person name="Ardell D.H."/>
            <person name="Canbaeck B."/>
            <person name="Eriksson A.-S."/>
            <person name="Naeslund A.K."/>
            <person name="Handley S.A."/>
            <person name="Huvet M."/>
            <person name="La Scola B."/>
            <person name="Holmberg M."/>
            <person name="Andersson S.G.E."/>
        </authorList>
    </citation>
    <scope>NUCLEOTIDE SEQUENCE [LARGE SCALE GENOMIC DNA]</scope>
    <source>
        <strain>Toulouse</strain>
    </source>
</reference>
<keyword id="KW-0067">ATP-binding</keyword>
<keyword id="KW-0997">Cell inner membrane</keyword>
<keyword id="KW-1003">Cell membrane</keyword>
<keyword id="KW-0963">Cytoplasm</keyword>
<keyword id="KW-0472">Membrane</keyword>
<keyword id="KW-0479">Metal-binding</keyword>
<keyword id="KW-0547">Nucleotide-binding</keyword>
<keyword id="KW-0653">Protein transport</keyword>
<keyword id="KW-1278">Translocase</keyword>
<keyword id="KW-0811">Translocation</keyword>
<keyword id="KW-0813">Transport</keyword>
<keyword id="KW-0862">Zinc</keyword>
<organism>
    <name type="scientific">Bartonella quintana (strain Toulouse)</name>
    <name type="common">Rochalimaea quintana</name>
    <dbReference type="NCBI Taxonomy" id="283165"/>
    <lineage>
        <taxon>Bacteria</taxon>
        <taxon>Pseudomonadati</taxon>
        <taxon>Pseudomonadota</taxon>
        <taxon>Alphaproteobacteria</taxon>
        <taxon>Hyphomicrobiales</taxon>
        <taxon>Bartonellaceae</taxon>
        <taxon>Bartonella</taxon>
    </lineage>
</organism>
<evidence type="ECO:0000255" key="1">
    <source>
        <dbReference type="HAMAP-Rule" id="MF_01382"/>
    </source>
</evidence>
<comment type="function">
    <text evidence="1">Part of the Sec protein translocase complex. Interacts with the SecYEG preprotein conducting channel. Has a central role in coupling the hydrolysis of ATP to the transfer of proteins into and across the cell membrane, serving both as a receptor for the preprotein-SecB complex and as an ATP-driven molecular motor driving the stepwise translocation of polypeptide chains across the membrane.</text>
</comment>
<comment type="catalytic activity">
    <reaction evidence="1">
        <text>ATP + H2O + cellular proteinSide 1 = ADP + phosphate + cellular proteinSide 2.</text>
        <dbReference type="EC" id="7.4.2.8"/>
    </reaction>
</comment>
<comment type="cofactor">
    <cofactor evidence="1">
        <name>Zn(2+)</name>
        <dbReference type="ChEBI" id="CHEBI:29105"/>
    </cofactor>
    <text evidence="1">May bind 1 zinc ion per subunit.</text>
</comment>
<comment type="subunit">
    <text evidence="1">Monomer and homodimer. Part of the essential Sec protein translocation apparatus which comprises SecA, SecYEG and auxiliary proteins SecDF-YajC and YidC.</text>
</comment>
<comment type="subcellular location">
    <subcellularLocation>
        <location evidence="1">Cell inner membrane</location>
        <topology evidence="1">Peripheral membrane protein</topology>
        <orientation evidence="1">Cytoplasmic side</orientation>
    </subcellularLocation>
    <subcellularLocation>
        <location evidence="1">Cytoplasm</location>
    </subcellularLocation>
    <text evidence="1">Distribution is 50-50.</text>
</comment>
<comment type="similarity">
    <text evidence="1">Belongs to the SecA family.</text>
</comment>